<name>EX7L_ECOSE</name>
<dbReference type="EC" id="3.1.11.6" evidence="1"/>
<dbReference type="EMBL" id="AP009240">
    <property type="protein sequence ID" value="BAG78319.1"/>
    <property type="molecule type" value="Genomic_DNA"/>
</dbReference>
<dbReference type="RefSeq" id="WP_000937931.1">
    <property type="nucleotide sequence ID" value="NC_011415.1"/>
</dbReference>
<dbReference type="SMR" id="B6I581"/>
<dbReference type="KEGG" id="ecy:ECSE_2795"/>
<dbReference type="HOGENOM" id="CLU_023625_3_1_6"/>
<dbReference type="Proteomes" id="UP000008199">
    <property type="component" value="Chromosome"/>
</dbReference>
<dbReference type="GO" id="GO:0005737">
    <property type="term" value="C:cytoplasm"/>
    <property type="evidence" value="ECO:0007669"/>
    <property type="project" value="UniProtKB-SubCell"/>
</dbReference>
<dbReference type="GO" id="GO:0009318">
    <property type="term" value="C:exodeoxyribonuclease VII complex"/>
    <property type="evidence" value="ECO:0007669"/>
    <property type="project" value="InterPro"/>
</dbReference>
<dbReference type="GO" id="GO:0008855">
    <property type="term" value="F:exodeoxyribonuclease VII activity"/>
    <property type="evidence" value="ECO:0007669"/>
    <property type="project" value="UniProtKB-UniRule"/>
</dbReference>
<dbReference type="GO" id="GO:0003676">
    <property type="term" value="F:nucleic acid binding"/>
    <property type="evidence" value="ECO:0007669"/>
    <property type="project" value="InterPro"/>
</dbReference>
<dbReference type="GO" id="GO:0006308">
    <property type="term" value="P:DNA catabolic process"/>
    <property type="evidence" value="ECO:0007669"/>
    <property type="project" value="UniProtKB-UniRule"/>
</dbReference>
<dbReference type="CDD" id="cd04489">
    <property type="entry name" value="ExoVII_LU_OBF"/>
    <property type="match status" value="1"/>
</dbReference>
<dbReference type="HAMAP" id="MF_00378">
    <property type="entry name" value="Exonuc_7_L"/>
    <property type="match status" value="1"/>
</dbReference>
<dbReference type="InterPro" id="IPR003753">
    <property type="entry name" value="Exonuc_VII_L"/>
</dbReference>
<dbReference type="InterPro" id="IPR020579">
    <property type="entry name" value="Exonuc_VII_lsu_C"/>
</dbReference>
<dbReference type="InterPro" id="IPR025824">
    <property type="entry name" value="OB-fold_nuc-bd_dom"/>
</dbReference>
<dbReference type="NCBIfam" id="TIGR00237">
    <property type="entry name" value="xseA"/>
    <property type="match status" value="1"/>
</dbReference>
<dbReference type="PANTHER" id="PTHR30008">
    <property type="entry name" value="EXODEOXYRIBONUCLEASE 7 LARGE SUBUNIT"/>
    <property type="match status" value="1"/>
</dbReference>
<dbReference type="PANTHER" id="PTHR30008:SF0">
    <property type="entry name" value="EXODEOXYRIBONUCLEASE 7 LARGE SUBUNIT"/>
    <property type="match status" value="1"/>
</dbReference>
<dbReference type="Pfam" id="PF02601">
    <property type="entry name" value="Exonuc_VII_L"/>
    <property type="match status" value="1"/>
</dbReference>
<dbReference type="Pfam" id="PF13742">
    <property type="entry name" value="tRNA_anti_2"/>
    <property type="match status" value="1"/>
</dbReference>
<evidence type="ECO:0000255" key="1">
    <source>
        <dbReference type="HAMAP-Rule" id="MF_00378"/>
    </source>
</evidence>
<proteinExistence type="inferred from homology"/>
<protein>
    <recommendedName>
        <fullName evidence="1">Exodeoxyribonuclease 7 large subunit</fullName>
        <ecNumber evidence="1">3.1.11.6</ecNumber>
    </recommendedName>
    <alternativeName>
        <fullName evidence="1">Exodeoxyribonuclease VII large subunit</fullName>
        <shortName evidence="1">Exonuclease VII large subunit</shortName>
    </alternativeName>
</protein>
<sequence length="456" mass="51844">MLPSQSPAIFTVSRLNQTVRLLLEHEMGQVWISGEISNFTQPASGHWYFTLKDDTAQVRCAMFRNSNRRVTFRPQHGQQVLVRANITLYEPRGDYQIIVESMQPAGEGLLQQKYEQLKAKLQAEGLFDQQYKKPLPSPAHCVGVITSKTGAALHDILHVLKRRDPSLPVIIYPTAVQGDDAPGQIVRAIELANQRNECDVLIVGRGGGSLEDLWSFNDERVARAIFASRIPVVSAVGHETDVTIADFVADLRAPTPSAAAEVVSRNQQELLRQVQSTRQRLEMAMDYYLANRTRRFTQIHHRLQQQHPQLRLARQQTMLERLQKRMSFALENQLKRTGQQQQRLTQRLNQQNPQPKIHRAQTRIQQLEYRLAEILRAQLSATRERFGNAVTHLEAVSPLSTLARGYSVTTATDGNVLKKVKQVKAGEMLTTRLEDGWIESEVKNIQPVKKSRKKVH</sequence>
<gene>
    <name evidence="1" type="primary">xseA</name>
    <name type="ordered locus">ECSE_2795</name>
</gene>
<accession>B6I581</accession>
<comment type="function">
    <text evidence="1">Bidirectionally degrades single-stranded DNA into large acid-insoluble oligonucleotides, which are then degraded further into small acid-soluble oligonucleotides.</text>
</comment>
<comment type="catalytic activity">
    <reaction evidence="1">
        <text>Exonucleolytic cleavage in either 5'- to 3'- or 3'- to 5'-direction to yield nucleoside 5'-phosphates.</text>
        <dbReference type="EC" id="3.1.11.6"/>
    </reaction>
</comment>
<comment type="subunit">
    <text evidence="1">Heterooligomer composed of large and small subunits.</text>
</comment>
<comment type="subcellular location">
    <subcellularLocation>
        <location evidence="1">Cytoplasm</location>
    </subcellularLocation>
</comment>
<comment type="similarity">
    <text evidence="1">Belongs to the XseA family.</text>
</comment>
<organism>
    <name type="scientific">Escherichia coli (strain SE11)</name>
    <dbReference type="NCBI Taxonomy" id="409438"/>
    <lineage>
        <taxon>Bacteria</taxon>
        <taxon>Pseudomonadati</taxon>
        <taxon>Pseudomonadota</taxon>
        <taxon>Gammaproteobacteria</taxon>
        <taxon>Enterobacterales</taxon>
        <taxon>Enterobacteriaceae</taxon>
        <taxon>Escherichia</taxon>
    </lineage>
</organism>
<feature type="chain" id="PRO_1000122059" description="Exodeoxyribonuclease 7 large subunit">
    <location>
        <begin position="1"/>
        <end position="456"/>
    </location>
</feature>
<reference key="1">
    <citation type="journal article" date="2008" name="DNA Res.">
        <title>Complete genome sequence and comparative analysis of the wild-type commensal Escherichia coli strain SE11 isolated from a healthy adult.</title>
        <authorList>
            <person name="Oshima K."/>
            <person name="Toh H."/>
            <person name="Ogura Y."/>
            <person name="Sasamoto H."/>
            <person name="Morita H."/>
            <person name="Park S.-H."/>
            <person name="Ooka T."/>
            <person name="Iyoda S."/>
            <person name="Taylor T.D."/>
            <person name="Hayashi T."/>
            <person name="Itoh K."/>
            <person name="Hattori M."/>
        </authorList>
    </citation>
    <scope>NUCLEOTIDE SEQUENCE [LARGE SCALE GENOMIC DNA]</scope>
    <source>
        <strain>SE11</strain>
    </source>
</reference>
<keyword id="KW-0963">Cytoplasm</keyword>
<keyword id="KW-0269">Exonuclease</keyword>
<keyword id="KW-0378">Hydrolase</keyword>
<keyword id="KW-0540">Nuclease</keyword>